<name>CHIS7_VERDV</name>
<feature type="chain" id="PRO_0000460806" description="Chitin synthase 7">
    <location>
        <begin position="1"/>
        <end position="699"/>
    </location>
</feature>
<feature type="transmembrane region" description="Helical" evidence="1">
    <location>
        <begin position="19"/>
        <end position="39"/>
    </location>
</feature>
<feature type="transmembrane region" description="Helical" evidence="1">
    <location>
        <begin position="58"/>
        <end position="80"/>
    </location>
</feature>
<feature type="transmembrane region" description="Helical" evidence="1">
    <location>
        <begin position="98"/>
        <end position="118"/>
    </location>
</feature>
<feature type="transmembrane region" description="Helical" evidence="1">
    <location>
        <begin position="445"/>
        <end position="465"/>
    </location>
</feature>
<feature type="transmembrane region" description="Helical" evidence="1">
    <location>
        <begin position="474"/>
        <end position="494"/>
    </location>
</feature>
<feature type="transmembrane region" description="Helical" evidence="1">
    <location>
        <begin position="507"/>
        <end position="527"/>
    </location>
</feature>
<feature type="region of interest" description="Disordered" evidence="2">
    <location>
        <begin position="628"/>
        <end position="648"/>
    </location>
</feature>
<keyword id="KW-1003">Cell membrane</keyword>
<keyword id="KW-0328">Glycosyltransferase</keyword>
<keyword id="KW-0472">Membrane</keyword>
<keyword id="KW-1185">Reference proteome</keyword>
<keyword id="KW-0808">Transferase</keyword>
<keyword id="KW-0812">Transmembrane</keyword>
<keyword id="KW-1133">Transmembrane helix</keyword>
<keyword id="KW-0843">Virulence</keyword>
<sequence length="699" mass="79883">MSDDERDDWPVQDIVYTSIVGVVMLAAVLEWFLWIAAFLYCLWKVFVKAEHWTIRVLSVVVALLFTALRSIFLPIMVVTLPLPAAVVEVWPPGMVEVLQWFGFWCFAGLLTVPWLFCIYQLVTNQLGRTKRIKQVLDEVSAPKVVIVMPCYKEEPDILVKAVDSVVDCDYPPSCIHVFLSFDGDQEDELYLRTIESLGISLTLESYPKSIDVTYKEARITVSRFPHGGKRHCQKATFELIDKVYRHYLQRNDNLFILFIDSDCILDRHCLQNFVYDMELSPGNRRDMLAMTGVITSTTRKHSLITILQDMEYVHGQLFERTVESGCGSVTCLPGALTMLRFSAFRRMAKYYFADKAEQCDDLFDFAKCHLGEDRWLTHLFMIGAKKRYQIQMCTSAFCKTEAAQTTKSLIKQRRRWFLGFITNEACMLTDWRLWKRYPVLIFVRFMQNTIRTTALLFFIMVLAIITTSKKVDQLPVGFIAVSLGLNWLLMIYFGAKLKRFKVWLYPVMFVVNPFFNWFYMVYGIFTAGQRTWGGPRADAAEASSGATAQEAIEQAEKAGDDLNIVPEMFVRAAAARRRSLNKGNQGGGLGRKTSVVRPPDKIDGRFTARNQLHGGFFTHGDESLDSIAAGGSGEASEPGTRWAPDPRESFDSTLYSQTYGNYGVPPRRLESIMDDEDRKKFELAQQSQSYTILRPARIV</sequence>
<reference key="1">
    <citation type="journal article" date="2011" name="PLoS Pathog.">
        <title>Comparative genomics yields insights into niche adaptation of plant vascular wilt pathogens.</title>
        <authorList>
            <person name="Klosterman S.J."/>
            <person name="Subbarao K.V."/>
            <person name="Kang S."/>
            <person name="Veronese P."/>
            <person name="Gold S.E."/>
            <person name="Thomma B.P.H.J."/>
            <person name="Chen Z."/>
            <person name="Henrissat B."/>
            <person name="Lee Y.-H."/>
            <person name="Park J."/>
            <person name="Garcia-Pedrajas M.D."/>
            <person name="Barbara D.J."/>
            <person name="Anchieta A."/>
            <person name="de Jonge R."/>
            <person name="Santhanam P."/>
            <person name="Maruthachalam K."/>
            <person name="Atallah Z."/>
            <person name="Amyotte S.G."/>
            <person name="Paz Z."/>
            <person name="Inderbitzin P."/>
            <person name="Hayes R.J."/>
            <person name="Heiman D.I."/>
            <person name="Young S."/>
            <person name="Zeng Q."/>
            <person name="Engels R."/>
            <person name="Galagan J."/>
            <person name="Cuomo C.A."/>
            <person name="Dobinson K.F."/>
            <person name="Ma L.-J."/>
        </authorList>
    </citation>
    <scope>NUCLEOTIDE SEQUENCE [LARGE SCALE GENOMIC DNA]</scope>
    <source>
        <strain>VdLs.17 / ATCC MYA-4575 / FGSC 10137</strain>
    </source>
</reference>
<reference key="2">
    <citation type="journal article" date="2022" name="J. Fungi">
        <title>Chitin Synthase Genes Are Differentially Required for Growth, Stress Response, and Virulence in Verticillium dahliae.</title>
        <authorList>
            <person name="Qin J."/>
            <person name="Zhao P."/>
            <person name="Ye Z."/>
            <person name="Sun L."/>
            <person name="Hu X."/>
            <person name="Zhang J."/>
        </authorList>
    </citation>
    <scope>FUNCTION</scope>
    <scope>DISRUPTION PHENOTYPE</scope>
</reference>
<organism>
    <name type="scientific">Verticillium dahliae (strain VdLs.17 / ATCC MYA-4575 / FGSC 10137)</name>
    <name type="common">Verticillium wilt</name>
    <dbReference type="NCBI Taxonomy" id="498257"/>
    <lineage>
        <taxon>Eukaryota</taxon>
        <taxon>Fungi</taxon>
        <taxon>Dikarya</taxon>
        <taxon>Ascomycota</taxon>
        <taxon>Pezizomycotina</taxon>
        <taxon>Sordariomycetes</taxon>
        <taxon>Hypocreomycetidae</taxon>
        <taxon>Glomerellales</taxon>
        <taxon>Plectosphaerellaceae</taxon>
        <taxon>Verticillium</taxon>
    </lineage>
</organism>
<proteinExistence type="inferred from homology"/>
<accession>G2WS43</accession>
<gene>
    <name evidence="4" type="primary">CHS7</name>
    <name type="ORF">VDAG_00376</name>
</gene>
<evidence type="ECO:0000255" key="1"/>
<evidence type="ECO:0000256" key="2">
    <source>
        <dbReference type="SAM" id="MobiDB-lite"/>
    </source>
</evidence>
<evidence type="ECO:0000269" key="3">
    <source>
    </source>
</evidence>
<evidence type="ECO:0000303" key="4">
    <source>
    </source>
</evidence>
<evidence type="ECO:0000305" key="5"/>
<evidence type="ECO:0000305" key="6">
    <source>
    </source>
</evidence>
<dbReference type="EC" id="2.4.1.16" evidence="6"/>
<dbReference type="EMBL" id="DS572695">
    <property type="protein sequence ID" value="EGY13694.1"/>
    <property type="molecule type" value="Genomic_DNA"/>
</dbReference>
<dbReference type="RefSeq" id="XP_009650048.1">
    <property type="nucleotide sequence ID" value="XM_009651753.1"/>
</dbReference>
<dbReference type="SMR" id="G2WS43"/>
<dbReference type="STRING" id="498257.G2WS43"/>
<dbReference type="EnsemblFungi" id="EGY13694">
    <property type="protein sequence ID" value="EGY13694"/>
    <property type="gene ID" value="VDAG_00376"/>
</dbReference>
<dbReference type="GeneID" id="20701839"/>
<dbReference type="KEGG" id="vda:VDAG_00376"/>
<dbReference type="eggNOG" id="KOG2571">
    <property type="taxonomic scope" value="Eukaryota"/>
</dbReference>
<dbReference type="HOGENOM" id="CLU_012773_0_0_1"/>
<dbReference type="InParanoid" id="G2WS43"/>
<dbReference type="OMA" id="NCIHVFL"/>
<dbReference type="OrthoDB" id="10904at1028384"/>
<dbReference type="PHI-base" id="PHI:123309"/>
<dbReference type="Proteomes" id="UP000001611">
    <property type="component" value="Chromosome 2"/>
</dbReference>
<dbReference type="GO" id="GO:0030428">
    <property type="term" value="C:cell septum"/>
    <property type="evidence" value="ECO:0007669"/>
    <property type="project" value="TreeGrafter"/>
</dbReference>
<dbReference type="GO" id="GO:0005886">
    <property type="term" value="C:plasma membrane"/>
    <property type="evidence" value="ECO:0007669"/>
    <property type="project" value="UniProtKB-SubCell"/>
</dbReference>
<dbReference type="GO" id="GO:0004100">
    <property type="term" value="F:chitin synthase activity"/>
    <property type="evidence" value="ECO:0007669"/>
    <property type="project" value="UniProtKB-EC"/>
</dbReference>
<dbReference type="GO" id="GO:0006031">
    <property type="term" value="P:chitin biosynthetic process"/>
    <property type="evidence" value="ECO:0007669"/>
    <property type="project" value="TreeGrafter"/>
</dbReference>
<dbReference type="FunFam" id="3.90.550.10:FF:000077">
    <property type="entry name" value="Probable chitin synthase D"/>
    <property type="match status" value="1"/>
</dbReference>
<dbReference type="Gene3D" id="3.90.550.10">
    <property type="entry name" value="Spore Coat Polysaccharide Biosynthesis Protein SpsA, Chain A"/>
    <property type="match status" value="1"/>
</dbReference>
<dbReference type="InterPro" id="IPR004835">
    <property type="entry name" value="Chitin_synth"/>
</dbReference>
<dbReference type="InterPro" id="IPR029044">
    <property type="entry name" value="Nucleotide-diphossugar_trans"/>
</dbReference>
<dbReference type="PANTHER" id="PTHR22914">
    <property type="entry name" value="CHITIN SYNTHASE"/>
    <property type="match status" value="1"/>
</dbReference>
<dbReference type="PANTHER" id="PTHR22914:SF46">
    <property type="entry name" value="CHITIN SYNTHASE"/>
    <property type="match status" value="1"/>
</dbReference>
<dbReference type="Pfam" id="PF03142">
    <property type="entry name" value="Chitin_synth_2"/>
    <property type="match status" value="1"/>
</dbReference>
<dbReference type="SUPFAM" id="SSF53448">
    <property type="entry name" value="Nucleotide-diphospho-sugar transferases"/>
    <property type="match status" value="1"/>
</dbReference>
<protein>
    <recommendedName>
        <fullName evidence="4">Chitin synthase 7</fullName>
        <ecNumber evidence="6">2.4.1.16</ecNumber>
    </recommendedName>
    <alternativeName>
        <fullName evidence="5">Chitin-UDP acetyl-glucosaminyl transferase 7</fullName>
    </alternativeName>
    <alternativeName>
        <fullName evidence="5">Class-VI chitin synthase 7</fullName>
    </alternativeName>
</protein>
<comment type="function">
    <text evidence="3 6">Polymerizes chitin, a structural polymer of the cell wall and septum, by transferring the sugar moiety of UDP-GlcNAc to the non-reducing end of the growing chitin polymer (Probable). Plays a role in cell wall integrity (PubMed:35887437). Required to successfully penetrate the host plants and thus plays a key role in pathogenicity (PubMed:35887437).</text>
</comment>
<comment type="catalytic activity">
    <reaction evidence="6">
        <text>[(1-&gt;4)-N-acetyl-beta-D-glucosaminyl](n) + UDP-N-acetyl-alpha-D-glucosamine = [(1-&gt;4)-N-acetyl-beta-D-glucosaminyl](n+1) + UDP + H(+)</text>
        <dbReference type="Rhea" id="RHEA:16637"/>
        <dbReference type="Rhea" id="RHEA-COMP:9593"/>
        <dbReference type="Rhea" id="RHEA-COMP:9595"/>
        <dbReference type="ChEBI" id="CHEBI:15378"/>
        <dbReference type="ChEBI" id="CHEBI:17029"/>
        <dbReference type="ChEBI" id="CHEBI:57705"/>
        <dbReference type="ChEBI" id="CHEBI:58223"/>
        <dbReference type="EC" id="2.4.1.16"/>
    </reaction>
    <physiologicalReaction direction="left-to-right" evidence="6">
        <dbReference type="Rhea" id="RHEA:16638"/>
    </physiologicalReaction>
</comment>
<comment type="subcellular location">
    <subcellularLocation>
        <location evidence="5">Cell membrane</location>
        <topology evidence="1">Multi-pass membrane protein</topology>
    </subcellularLocation>
</comment>
<comment type="disruption phenotype">
    <text evidence="3">Leads to a winkled surface morphology (PubMed:35887437). Impairs penetration in host plants and exhibits a significant reduced pathogenicity in Arabidopsis and cotton plants (PubMed:35887437).</text>
</comment>
<comment type="similarity">
    <text evidence="5">Belongs to the chitin synthase family. Class VI subfamily.</text>
</comment>